<gene>
    <name type="primary">CAV3</name>
</gene>
<sequence length="151" mass="17259">MMAEEHTDLEAQIVKDIHCKEIDLVNRDPKNINEDIVKVDFEDVIAEPVGTYSFDGVWKVSYTTFTVSKYWCYRLLSTLLGVPLALLWGFLFACISFCHIWAVVPCIKSYLIEIQCISHIYSLCIRTFCNPLFAALGQVCSSIKVVLRKEV</sequence>
<feature type="chain" id="PRO_0000144140" description="Caveolin-3">
    <location>
        <begin position="1"/>
        <end position="151"/>
    </location>
</feature>
<feature type="topological domain" description="Cytoplasmic" evidence="4">
    <location>
        <begin position="1"/>
        <end position="83"/>
    </location>
</feature>
<feature type="intramembrane region" description="Helical" evidence="4">
    <location>
        <begin position="84"/>
        <end position="104"/>
    </location>
</feature>
<feature type="topological domain" description="Cytoplasmic" evidence="4">
    <location>
        <begin position="105"/>
        <end position="151"/>
    </location>
</feature>
<feature type="region of interest" description="Required for interaction with DAG1" evidence="6">
    <location>
        <begin position="64"/>
        <end position="114"/>
    </location>
</feature>
<feature type="cross-link" description="Glycyl lysine isopeptide (Lys-Gly) (interchain with G-Cter in SUMO3)" evidence="27">
    <location>
        <position position="38"/>
    </location>
</feature>
<feature type="sequence variant" id="VAR_043694" description="In SIDS; dbSNP:rs121909281." evidence="25">
    <original>V</original>
    <variation>L</variation>
    <location>
        <position position="14"/>
    </location>
</feature>
<feature type="sequence variant" id="VAR_011512" description="In HYPCK, RMD2 and MPDT; dbSNP:rs116840778." evidence="5 9 11 12 16 21">
    <original>R</original>
    <variation>Q</variation>
    <location>
        <position position="27"/>
    </location>
</feature>
<feature type="sequence variant" id="VAR_015374" description="In RMD2; dbSNP:rs116840782." evidence="14">
    <original>D</original>
    <variation>E</variation>
    <location>
        <position position="28"/>
    </location>
</feature>
<feature type="sequence variant" id="VAR_029540" description="In HYPCK; dbSNP:rs116840786." evidence="13">
    <original>P</original>
    <variation>L</variation>
    <location>
        <position position="29"/>
    </location>
</feature>
<feature type="sequence variant" id="VAR_021016" description="In RMD2 and MPDT; dbSNP:rs1008642." evidence="20 21">
    <original>N</original>
    <variation>K</variation>
    <location>
        <position position="33"/>
    </location>
</feature>
<feature type="sequence variant" id="VAR_021017" description="In RMD2; dbSNP:rs116840788." evidence="20">
    <original>V</original>
    <variation>E</variation>
    <location>
        <position position="44"/>
    </location>
</feature>
<feature type="sequence variant" id="VAR_011513" description="In RMD2; decreased surface expression of the CAV3 protein; dbSNP:rs116840789." evidence="7 9 21">
    <original>A</original>
    <variation>T</variation>
    <location>
        <position position="46"/>
    </location>
</feature>
<feature type="sequence variant" id="VAR_011514" description="In RMD2; dbSNP:rs116840773." evidence="9">
    <original>A</original>
    <variation>V</variation>
    <location>
        <position position="46"/>
    </location>
</feature>
<feature type="sequence variant" id="VAR_029541" description="In RMD2; dbSNP:rs116840794." evidence="23">
    <original>S</original>
    <variation>G</variation>
    <location>
        <position position="53"/>
    </location>
</feature>
<feature type="sequence variant" id="VAR_029542" description="In dbSNP:rs72546667." evidence="8 24 29">
    <original>G</original>
    <variation>S</variation>
    <location>
        <position position="56"/>
    </location>
</feature>
<feature type="sequence variant" id="VAR_010742" description="In HYPCK; dbSNP:rs116840795." evidence="19">
    <original>V</original>
    <variation>M</variation>
    <location>
        <position position="57"/>
    </location>
</feature>
<feature type="sequence variant" id="VAR_026696" description="In a patient with mild proximal myopathy; dbSNP:rs116840796." evidence="21">
    <original>S</original>
    <variation>R</variation>
    <location>
        <position position="61"/>
    </location>
</feature>
<feature type="sequence variant" id="VAR_001402" description="In RMD2." evidence="30">
    <location>
        <begin position="64"/>
        <end position="66"/>
    </location>
</feature>
<feature type="sequence variant" id="VAR_021018" description="In RMD2; dbSNP:rs199476332." evidence="10">
    <original>T</original>
    <variation>P</variation>
    <location>
        <position position="64"/>
    </location>
</feature>
<feature type="sequence variant" id="VAR_029543" description="In CMH; dbSNP:rs121909280." evidence="18">
    <original>T</original>
    <variation>S</variation>
    <location>
        <position position="64"/>
    </location>
</feature>
<feature type="sequence variant" id="VAR_010743" description="In dbSNP:rs116840776." evidence="8 24 29">
    <original>C</original>
    <variation>W</variation>
    <location>
        <position position="72"/>
    </location>
</feature>
<feature type="sequence variant" id="VAR_043695" description="In LQT9 and SIDS; dbSNP:rs72546668." evidence="24 25">
    <original>T</original>
    <variation>M</variation>
    <location>
        <position position="78"/>
    </location>
</feature>
<feature type="sequence variant" id="VAR_043696" description="In LQT9 and SIDS; dbSNP:rs121909282." evidence="25">
    <original>L</original>
    <variation>R</variation>
    <location>
        <position position="79"/>
    </location>
</feature>
<feature type="sequence variant" id="VAR_043697" description="In LQT9; dbSNP:rs104893715." evidence="24">
    <original>A</original>
    <variation>T</variation>
    <location>
        <position position="85"/>
    </location>
</feature>
<feature type="sequence variant" id="VAR_016207" description="In RMD2; dbSNP:rs28936685." evidence="15">
    <original>L</original>
    <variation>P</variation>
    <location>
        <position position="87"/>
    </location>
</feature>
<feature type="sequence variant" id="VAR_016208" description="In RMD2; dbSNP:rs28936686." evidence="15 22">
    <original>A</original>
    <variation>T</variation>
    <location>
        <position position="93"/>
    </location>
</feature>
<feature type="sequence variant" id="VAR_043698" description="In LQT9; increase in late sodium current; dbSNP:rs104893714." evidence="24">
    <original>F</original>
    <variation>C</variation>
    <location>
        <position position="97"/>
    </location>
</feature>
<feature type="sequence variant" id="VAR_029544" description="In HYPCK." evidence="17">
    <location>
        <position position="97"/>
    </location>
</feature>
<feature type="sequence variant" id="VAR_001403" description="In RMD2; dbSNP:rs116840805." evidence="9 30">
    <original>P</original>
    <variation>L</variation>
    <location>
        <position position="105"/>
    </location>
</feature>
<feature type="sequence variant" id="VAR_029545" description="In dbSNP:rs116840777." evidence="8">
    <original>R</original>
    <variation>H</variation>
    <location>
        <position position="126"/>
    </location>
</feature>
<feature type="sequence variant" id="VAR_043699" description="In LQT9; increase in late sodium current; dbSNP:rs104893713." evidence="24">
    <original>S</original>
    <variation>R</variation>
    <location>
        <position position="141"/>
    </location>
</feature>
<reference key="1">
    <citation type="journal article" date="1998" name="Nat. Genet.">
        <title>Mutations in the caveolin-3 gene cause autosomal dominant limb-girdle muscular dystrophy.</title>
        <authorList>
            <person name="Minetti C."/>
            <person name="Sotgia F."/>
            <person name="Bruno C."/>
            <person name="Scartezzini P."/>
            <person name="Broda P."/>
            <person name="Bado M."/>
            <person name="Masetti E."/>
            <person name="Mazzocco M."/>
            <person name="Egeo A."/>
            <person name="Donati M.A."/>
            <person name="Volonte D."/>
            <person name="Galbiati F."/>
            <person name="Cordone G."/>
            <person name="Bricarelli F.D."/>
            <person name="Lisanti M.P."/>
            <person name="Zara F."/>
        </authorList>
    </citation>
    <scope>NUCLEOTIDE SEQUENCE [MRNA]</scope>
    <scope>VARIANTS RMD2 64-THR--THR-66 DEL AND LEU-105</scope>
</reference>
<reference key="2">
    <citation type="journal article" date="1998" name="Biochim. Biophys. Acta">
        <title>Molecular cloning of human caveolin 3.</title>
        <authorList>
            <person name="Biederer C."/>
            <person name="Ries S."/>
            <person name="Drobnik W."/>
            <person name="Schmitz G."/>
        </authorList>
    </citation>
    <scope>NUCLEOTIDE SEQUENCE [MRNA]</scope>
    <scope>TISSUE SPECIFICITY</scope>
    <source>
        <tissue>Skeletal muscle</tissue>
    </source>
</reference>
<reference key="3">
    <citation type="journal article" date="1998" name="Hum. Mol. Genet.">
        <title>Caveolin-3 in muscular dystrophy.</title>
        <authorList>
            <person name="McNally E.M."/>
            <person name="de Sa Moreira E."/>
            <person name="Duggan D.J."/>
            <person name="Bonnemann C.G."/>
            <person name="Lisanti M.P."/>
            <person name="Lidov H.G.W."/>
            <person name="Vainzof M."/>
            <person name="Passos-Bueno M.R."/>
            <person name="Hoffman E.P."/>
            <person name="Zatz M."/>
            <person name="Kunkel L.M."/>
        </authorList>
    </citation>
    <scope>NUCLEOTIDE SEQUENCE [GENOMIC DNA / MRNA]</scope>
    <scope>VARIANTS SER-56 AND TRP-72</scope>
</reference>
<reference key="4">
    <citation type="journal article" date="2004" name="Nat. Genet.">
        <title>Complete sequencing and characterization of 21,243 full-length human cDNAs.</title>
        <authorList>
            <person name="Ota T."/>
            <person name="Suzuki Y."/>
            <person name="Nishikawa T."/>
            <person name="Otsuki T."/>
            <person name="Sugiyama T."/>
            <person name="Irie R."/>
            <person name="Wakamatsu A."/>
            <person name="Hayashi K."/>
            <person name="Sato H."/>
            <person name="Nagai K."/>
            <person name="Kimura K."/>
            <person name="Makita H."/>
            <person name="Sekine M."/>
            <person name="Obayashi M."/>
            <person name="Nishi T."/>
            <person name="Shibahara T."/>
            <person name="Tanaka T."/>
            <person name="Ishii S."/>
            <person name="Yamamoto J."/>
            <person name="Saito K."/>
            <person name="Kawai Y."/>
            <person name="Isono Y."/>
            <person name="Nakamura Y."/>
            <person name="Nagahari K."/>
            <person name="Murakami K."/>
            <person name="Yasuda T."/>
            <person name="Iwayanagi T."/>
            <person name="Wagatsuma M."/>
            <person name="Shiratori A."/>
            <person name="Sudo H."/>
            <person name="Hosoiri T."/>
            <person name="Kaku Y."/>
            <person name="Kodaira H."/>
            <person name="Kondo H."/>
            <person name="Sugawara M."/>
            <person name="Takahashi M."/>
            <person name="Kanda K."/>
            <person name="Yokoi T."/>
            <person name="Furuya T."/>
            <person name="Kikkawa E."/>
            <person name="Omura Y."/>
            <person name="Abe K."/>
            <person name="Kamihara K."/>
            <person name="Katsuta N."/>
            <person name="Sato K."/>
            <person name="Tanikawa M."/>
            <person name="Yamazaki M."/>
            <person name="Ninomiya K."/>
            <person name="Ishibashi T."/>
            <person name="Yamashita H."/>
            <person name="Murakawa K."/>
            <person name="Fujimori K."/>
            <person name="Tanai H."/>
            <person name="Kimata M."/>
            <person name="Watanabe M."/>
            <person name="Hiraoka S."/>
            <person name="Chiba Y."/>
            <person name="Ishida S."/>
            <person name="Ono Y."/>
            <person name="Takiguchi S."/>
            <person name="Watanabe S."/>
            <person name="Yosida M."/>
            <person name="Hotuta T."/>
            <person name="Kusano J."/>
            <person name="Kanehori K."/>
            <person name="Takahashi-Fujii A."/>
            <person name="Hara H."/>
            <person name="Tanase T.-O."/>
            <person name="Nomura Y."/>
            <person name="Togiya S."/>
            <person name="Komai F."/>
            <person name="Hara R."/>
            <person name="Takeuchi K."/>
            <person name="Arita M."/>
            <person name="Imose N."/>
            <person name="Musashino K."/>
            <person name="Yuuki H."/>
            <person name="Oshima A."/>
            <person name="Sasaki N."/>
            <person name="Aotsuka S."/>
            <person name="Yoshikawa Y."/>
            <person name="Matsunawa H."/>
            <person name="Ichihara T."/>
            <person name="Shiohata N."/>
            <person name="Sano S."/>
            <person name="Moriya S."/>
            <person name="Momiyama H."/>
            <person name="Satoh N."/>
            <person name="Takami S."/>
            <person name="Terashima Y."/>
            <person name="Suzuki O."/>
            <person name="Nakagawa S."/>
            <person name="Senoh A."/>
            <person name="Mizoguchi H."/>
            <person name="Goto Y."/>
            <person name="Shimizu F."/>
            <person name="Wakebe H."/>
            <person name="Hishigaki H."/>
            <person name="Watanabe T."/>
            <person name="Sugiyama A."/>
            <person name="Takemoto M."/>
            <person name="Kawakami B."/>
            <person name="Yamazaki M."/>
            <person name="Watanabe K."/>
            <person name="Kumagai A."/>
            <person name="Itakura S."/>
            <person name="Fukuzumi Y."/>
            <person name="Fujimori Y."/>
            <person name="Komiyama M."/>
            <person name="Tashiro H."/>
            <person name="Tanigami A."/>
            <person name="Fujiwara T."/>
            <person name="Ono T."/>
            <person name="Yamada K."/>
            <person name="Fujii Y."/>
            <person name="Ozaki K."/>
            <person name="Hirao M."/>
            <person name="Ohmori Y."/>
            <person name="Kawabata A."/>
            <person name="Hikiji T."/>
            <person name="Kobatake N."/>
            <person name="Inagaki H."/>
            <person name="Ikema Y."/>
            <person name="Okamoto S."/>
            <person name="Okitani R."/>
            <person name="Kawakami T."/>
            <person name="Noguchi S."/>
            <person name="Itoh T."/>
            <person name="Shigeta K."/>
            <person name="Senba T."/>
            <person name="Matsumura K."/>
            <person name="Nakajima Y."/>
            <person name="Mizuno T."/>
            <person name="Morinaga M."/>
            <person name="Sasaki M."/>
            <person name="Togashi T."/>
            <person name="Oyama M."/>
            <person name="Hata H."/>
            <person name="Watanabe M."/>
            <person name="Komatsu T."/>
            <person name="Mizushima-Sugano J."/>
            <person name="Satoh T."/>
            <person name="Shirai Y."/>
            <person name="Takahashi Y."/>
            <person name="Nakagawa K."/>
            <person name="Okumura K."/>
            <person name="Nagase T."/>
            <person name="Nomura N."/>
            <person name="Kikuchi H."/>
            <person name="Masuho Y."/>
            <person name="Yamashita R."/>
            <person name="Nakai K."/>
            <person name="Yada T."/>
            <person name="Nakamura Y."/>
            <person name="Ohara O."/>
            <person name="Isogai T."/>
            <person name="Sugano S."/>
        </authorList>
    </citation>
    <scope>NUCLEOTIDE SEQUENCE [LARGE SCALE MRNA]</scope>
    <source>
        <tissue>Skeletal muscle</tissue>
    </source>
</reference>
<reference key="5">
    <citation type="journal article" date="2006" name="Nature">
        <title>The DNA sequence, annotation and analysis of human chromosome 3.</title>
        <authorList>
            <person name="Muzny D.M."/>
            <person name="Scherer S.E."/>
            <person name="Kaul R."/>
            <person name="Wang J."/>
            <person name="Yu J."/>
            <person name="Sudbrak R."/>
            <person name="Buhay C.J."/>
            <person name="Chen R."/>
            <person name="Cree A."/>
            <person name="Ding Y."/>
            <person name="Dugan-Rocha S."/>
            <person name="Gill R."/>
            <person name="Gunaratne P."/>
            <person name="Harris R.A."/>
            <person name="Hawes A.C."/>
            <person name="Hernandez J."/>
            <person name="Hodgson A.V."/>
            <person name="Hume J."/>
            <person name="Jackson A."/>
            <person name="Khan Z.M."/>
            <person name="Kovar-Smith C."/>
            <person name="Lewis L.R."/>
            <person name="Lozado R.J."/>
            <person name="Metzker M.L."/>
            <person name="Milosavljevic A."/>
            <person name="Miner G.R."/>
            <person name="Morgan M.B."/>
            <person name="Nazareth L.V."/>
            <person name="Scott G."/>
            <person name="Sodergren E."/>
            <person name="Song X.-Z."/>
            <person name="Steffen D."/>
            <person name="Wei S."/>
            <person name="Wheeler D.A."/>
            <person name="Wright M.W."/>
            <person name="Worley K.C."/>
            <person name="Yuan Y."/>
            <person name="Zhang Z."/>
            <person name="Adams C.Q."/>
            <person name="Ansari-Lari M.A."/>
            <person name="Ayele M."/>
            <person name="Brown M.J."/>
            <person name="Chen G."/>
            <person name="Chen Z."/>
            <person name="Clendenning J."/>
            <person name="Clerc-Blankenburg K.P."/>
            <person name="Chen R."/>
            <person name="Chen Z."/>
            <person name="Davis C."/>
            <person name="Delgado O."/>
            <person name="Dinh H.H."/>
            <person name="Dong W."/>
            <person name="Draper H."/>
            <person name="Ernst S."/>
            <person name="Fu G."/>
            <person name="Gonzalez-Garay M.L."/>
            <person name="Garcia D.K."/>
            <person name="Gillett W."/>
            <person name="Gu J."/>
            <person name="Hao B."/>
            <person name="Haugen E."/>
            <person name="Havlak P."/>
            <person name="He X."/>
            <person name="Hennig S."/>
            <person name="Hu S."/>
            <person name="Huang W."/>
            <person name="Jackson L.R."/>
            <person name="Jacob L.S."/>
            <person name="Kelly S.H."/>
            <person name="Kube M."/>
            <person name="Levy R."/>
            <person name="Li Z."/>
            <person name="Liu B."/>
            <person name="Liu J."/>
            <person name="Liu W."/>
            <person name="Lu J."/>
            <person name="Maheshwari M."/>
            <person name="Nguyen B.-V."/>
            <person name="Okwuonu G.O."/>
            <person name="Palmeiri A."/>
            <person name="Pasternak S."/>
            <person name="Perez L.M."/>
            <person name="Phelps K.A."/>
            <person name="Plopper F.J."/>
            <person name="Qiang B."/>
            <person name="Raymond C."/>
            <person name="Rodriguez R."/>
            <person name="Saenphimmachak C."/>
            <person name="Santibanez J."/>
            <person name="Shen H."/>
            <person name="Shen Y."/>
            <person name="Subramanian S."/>
            <person name="Tabor P.E."/>
            <person name="Verduzco D."/>
            <person name="Waldron L."/>
            <person name="Wang J."/>
            <person name="Wang J."/>
            <person name="Wang Q."/>
            <person name="Williams G.A."/>
            <person name="Wong G.K.-S."/>
            <person name="Yao Z."/>
            <person name="Zhang J."/>
            <person name="Zhang X."/>
            <person name="Zhao G."/>
            <person name="Zhou J."/>
            <person name="Zhou Y."/>
            <person name="Nelson D."/>
            <person name="Lehrach H."/>
            <person name="Reinhardt R."/>
            <person name="Naylor S.L."/>
            <person name="Yang H."/>
            <person name="Olson M."/>
            <person name="Weinstock G."/>
            <person name="Gibbs R.A."/>
        </authorList>
    </citation>
    <scope>NUCLEOTIDE SEQUENCE [LARGE SCALE GENOMIC DNA]</scope>
</reference>
<reference key="6">
    <citation type="journal article" date="2004" name="Genome Res.">
        <title>The status, quality, and expansion of the NIH full-length cDNA project: the Mammalian Gene Collection (MGC).</title>
        <authorList>
            <consortium name="The MGC Project Team"/>
        </authorList>
    </citation>
    <scope>NUCLEOTIDE SEQUENCE [LARGE SCALE MRNA]</scope>
</reference>
<reference key="7">
    <citation type="journal article" date="2000" name="J. Biol. Chem.">
        <title>Caveolin-3 directly interacts with the C-terminal tail of beta -dystroglycan. Identification of a central WW-like domain within caveolin family members.</title>
        <authorList>
            <person name="Sotgia F."/>
            <person name="Lee J.K."/>
            <person name="Das K."/>
            <person name="Bedford M."/>
            <person name="Petrucci T.C."/>
            <person name="Macioce P."/>
            <person name="Sargiacomo M."/>
            <person name="Bricarelli F.D."/>
            <person name="Minetti C."/>
            <person name="Sudol M."/>
            <person name="Lisanti M.P."/>
        </authorList>
    </citation>
    <scope>INTERACTION WITH DAG1</scope>
</reference>
<reference key="8">
    <citation type="journal article" date="2001" name="Hum. Mol. Genet.">
        <title>The sarcolemmal proteins dysferlin and caveolin-3 interact in skeletal muscle.</title>
        <authorList>
            <person name="Matsuda C."/>
            <person name="Hayashi Y.K."/>
            <person name="Ogawa M."/>
            <person name="Aoki M."/>
            <person name="Murayama K."/>
            <person name="Nishino I."/>
            <person name="Nonaka I."/>
            <person name="Arahata K."/>
            <person name="Brown R.H. Jr."/>
        </authorList>
    </citation>
    <scope>INTERACTION WITH DYSF</scope>
    <scope>VARIANT RMD2 PRO-64</scope>
</reference>
<reference key="9">
    <citation type="journal article" date="2009" name="EMBO J.">
        <title>SRBC/cavin-3 is a caveolin adapter protein that regulates caveolae function.</title>
        <authorList>
            <person name="McMahon K.A."/>
            <person name="Zajicek H."/>
            <person name="Li W.P."/>
            <person name="Peyton M.J."/>
            <person name="Minna J.D."/>
            <person name="Hernandez V.J."/>
            <person name="Luby-Phelps K."/>
            <person name="Anderson R.G."/>
        </authorList>
    </citation>
    <scope>FUNCTION</scope>
</reference>
<reference key="10">
    <citation type="journal article" date="2011" name="J. Biol. Chem.">
        <title>Caveolin-3 undergoes SUMOylation by the SUMO E3 ligase PIASy: sumoylation affects G-protein-coupled receptor desensitization.</title>
        <authorList>
            <person name="Fuhs S.R."/>
            <person name="Insel P.A."/>
        </authorList>
    </citation>
    <scope>SUMOYLATION AT LYS-38</scope>
</reference>
<reference key="11">
    <citation type="journal article" date="2014" name="Proc. Natl. Acad. Sci. U.S.A.">
        <title>MURC/Cavin-4 facilitates recruitment of ERK to caveolae and concentric cardiac hypertrophy induced by alpha1-adrenergic receptors.</title>
        <authorList>
            <person name="Ogata T."/>
            <person name="Naito D."/>
            <person name="Nakanishi N."/>
            <person name="Hayashi Y.K."/>
            <person name="Taniguchi T."/>
            <person name="Miyagawa K."/>
            <person name="Hamaoka T."/>
            <person name="Maruyama N."/>
            <person name="Matoba S."/>
            <person name="Ikeda K."/>
            <person name="Yamada H."/>
            <person name="Oh H."/>
            <person name="Ueyama T."/>
        </authorList>
    </citation>
    <scope>INTERACTION WITH CAVIN1; CAVIN2 AND CAVIN4</scope>
</reference>
<reference key="12">
    <citation type="journal article" date="2015" name="Am. J. Physiol.">
        <title>The coiled-coil domain of MURC/cavin-4 is involved in membrane trafficking of caveolin-3 in cardiomyocytes.</title>
        <authorList>
            <person name="Naito D."/>
            <person name="Ogata T."/>
            <person name="Hamaoka T."/>
            <person name="Nakanishi N."/>
            <person name="Miyagawa K."/>
            <person name="Maruyama N."/>
            <person name="Kasahara T."/>
            <person name="Taniguchi T."/>
            <person name="Nishi M."/>
            <person name="Matoba S."/>
            <person name="Ueyama T."/>
        </authorList>
    </citation>
    <scope>INTERACTION WITH CAVIN4</scope>
</reference>
<reference key="13">
    <citation type="journal article" date="2000" name="Hum. Mol. Genet.">
        <title>Dissociation of the dystroglycan complex in caveolin-3-deficient limb girdle muscular dystrophy.</title>
        <authorList>
            <person name="Herrmann R."/>
            <person name="Straub V."/>
            <person name="Blank M."/>
            <person name="Kutzick C."/>
            <person name="Franke N."/>
            <person name="Jacob E.N."/>
            <person name="Lenard H.-G."/>
            <person name="Kroger S."/>
            <person name="Voit T."/>
        </authorList>
    </citation>
    <scope>VARIANT RMD2 THR-46</scope>
</reference>
<reference key="14">
    <citation type="journal article" date="2000" name="Neurology">
        <title>Mutation in the CAV3 gene causes partial caveolin-3 deficiency and hyperCKemia.</title>
        <authorList>
            <person name="Carbone I."/>
            <person name="Bruno C."/>
            <person name="Sotgia F."/>
            <person name="Bado M."/>
            <person name="Broda P."/>
            <person name="Masetti E."/>
            <person name="Panella A."/>
            <person name="Zara F."/>
            <person name="Bricarelli F.D."/>
            <person name="Cordone G."/>
            <person name="Lisanti M.P."/>
            <person name="Minetti C."/>
        </authorList>
    </citation>
    <scope>VARIANT HYPCK GLN-27</scope>
</reference>
<reference key="15">
    <citation type="journal article" date="2001" name="Am. J. Med. Genet.">
        <title>Mutations in the caveolin-3 gene: when are they pathogenic?</title>
        <authorList>
            <person name="de Paula F."/>
            <person name="Vainzof M."/>
            <person name="Bernardino A.L.F."/>
            <person name="McNally E."/>
            <person name="Kunkel L.M."/>
            <person name="Zatz M."/>
        </authorList>
    </citation>
    <scope>VARIANTS SER-56; TRP-72 AND HIS-126</scope>
</reference>
<reference key="16">
    <citation type="journal article" date="2001" name="Nat. Genet.">
        <title>Mutations in CAV3 cause mechanical hyperirritability of skeletal muscle in rippling muscle disease.</title>
        <authorList>
            <person name="Betz R.C."/>
            <person name="Schoser B.G.H."/>
            <person name="Kasper D."/>
            <person name="Ricker K."/>
            <person name="Ramirez A."/>
            <person name="Stein V."/>
            <person name="Torbergsen T."/>
            <person name="Lee Y.-A."/>
            <person name="Nothen M.M."/>
            <person name="Wienker T.F."/>
            <person name="Malin J.-P."/>
            <person name="Propping P."/>
            <person name="Reis A."/>
            <person name="Mortier W."/>
            <person name="Jentsch T.J."/>
            <person name="Vorgerd M."/>
            <person name="Kubisch C."/>
        </authorList>
    </citation>
    <scope>INVOLVEMENT IN RMD2</scope>
    <scope>VARIANTS RMD2 GLN-27; THR-46; VAL-46 AND LEU-105</scope>
    <scope>CHARACTERIZATION OF VARIANT RMD2 THR-46</scope>
</reference>
<reference key="17">
    <citation type="journal article" date="2001" name="Neurology">
        <title>A sporadic case of rippling muscle disease caused by a de novo caveolin-3 mutation.</title>
        <authorList>
            <person name="Vorgerd M."/>
            <person name="Ricker K."/>
            <person name="Ziemssen F."/>
            <person name="Kress W."/>
            <person name="Goebel H.H."/>
            <person name="Nix W.A."/>
            <person name="Kubisch C."/>
            <person name="Schoser B.G.H."/>
            <person name="Mortier W."/>
        </authorList>
    </citation>
    <scope>INVOLVEMENT IN RMD2</scope>
    <scope>VARIANT RMD2 GLN-27</scope>
</reference>
<reference key="18">
    <citation type="journal article" date="2002" name="J. Neurol. Neurosurg. Psych.">
        <title>Familial isolated hyperCKaemia associated with a new mutation in the caveolin-3 (CAV-3) gene.</title>
        <authorList>
            <person name="Merlini L."/>
            <person name="Carbone I."/>
            <person name="Capanni C."/>
            <person name="Sabatelli P."/>
            <person name="Tortorelli S."/>
            <person name="Sotgia F."/>
            <person name="Lisanti M.P."/>
            <person name="Bruno C."/>
            <person name="Minetti C."/>
        </authorList>
    </citation>
    <scope>VARIANT HYPCK LEU-29</scope>
</reference>
<reference key="19">
    <citation type="journal article" date="2003" name="J. Neurol. Neurosurg. Psych.">
        <authorList>
            <person name="Merlini L."/>
            <person name="Carbone I."/>
            <person name="Capanni C."/>
            <person name="Sabatelli P."/>
            <person name="Tortorelli S."/>
            <person name="Sotgia F."/>
            <person name="Lisanti M.P."/>
            <person name="Bruno C."/>
            <person name="Minetti C."/>
        </authorList>
    </citation>
    <scope>ERRATUM OF PUBMED:12082049</scope>
</reference>
<reference key="20">
    <citation type="journal article" date="2002" name="Neurology">
        <title>Mutation in the caveolin-3 gene causes a peculiar form of distal myopathy.</title>
        <authorList>
            <person name="Tateyama M."/>
            <person name="Aoki M."/>
            <person name="Nishino I."/>
            <person name="Hayashi Y.K."/>
            <person name="Sekiguchi S."/>
            <person name="Shiga Y."/>
            <person name="Takahashi T."/>
            <person name="Onodera Y."/>
            <person name="Haginoya K."/>
            <person name="Kobayashi K."/>
            <person name="Iinuma K."/>
            <person name="Nonaka I."/>
            <person name="Arahata K."/>
            <person name="Itoyama Y."/>
        </authorList>
    </citation>
    <scope>VARIANT MPDT GLN-27</scope>
</reference>
<reference key="21">
    <citation type="journal article" date="2002" name="Neurology">
        <authorList>
            <person name="Tateyama M."/>
            <person name="Aoki M."/>
            <person name="Nishino I."/>
            <person name="Hayashi Y.K."/>
            <person name="Sekiguchi S."/>
            <person name="Shiga Y."/>
            <person name="Takahashi T."/>
            <person name="Onodera Y."/>
            <person name="Haginoya K."/>
            <person name="Kobayashi K."/>
            <person name="Iinuma K."/>
            <person name="Nonaka I."/>
            <person name="Arahata K."/>
            <person name="Itoyama Y."/>
        </authorList>
    </citation>
    <scope>ERRATUM OF PUBMED:11805270</scope>
</reference>
<reference key="22">
    <citation type="journal article" date="2003" name="Ann. Neurol.">
        <title>Consequences of a novel caveolin-3 mutation in a large German family.</title>
        <authorList>
            <person name="Fischer D."/>
            <person name="Schroers A."/>
            <person name="Blumcke I."/>
            <person name="Urbach H."/>
            <person name="Zerres K."/>
            <person name="Mortier W."/>
            <person name="Vorgerd M."/>
            <person name="Schroder R."/>
        </authorList>
    </citation>
    <scope>VARIANT RMD2 GLU-28</scope>
</reference>
<reference key="23">
    <citation type="journal article" date="2003" name="Ann. Neurol.">
        <title>Homozygous mutations in caveolin-3 cause a severe form of rippling muscle disease.</title>
        <authorList>
            <person name="Kubisch C."/>
            <person name="Schoser B.G.H."/>
            <person name="von Duering M."/>
            <person name="Betz R.C."/>
            <person name="Goebel H.-H."/>
            <person name="Zahn S."/>
            <person name="Ehrbrecht A."/>
            <person name="Aasly J."/>
            <person name="Schroers A."/>
            <person name="Popovic N."/>
            <person name="Lochmueller H."/>
            <person name="Schroeder J.M."/>
            <person name="Bruening T."/>
            <person name="Malin J.-P."/>
            <person name="Fricke B."/>
            <person name="Meinck H.-M."/>
            <person name="Torbergsen T."/>
            <person name="Engels H."/>
            <person name="Voss B."/>
            <person name="Vorgerd M."/>
        </authorList>
    </citation>
    <scope>VARIANTS RMD2 PRO-87 AND THR-93</scope>
</reference>
<reference key="24">
    <citation type="journal article" date="2003" name="Neurology">
        <title>Limb-girdle muscular dystrophy in a 71-year-old woman with an R27Q mutation in the CAV3 gene.</title>
        <authorList>
            <person name="Figarella-Branger D."/>
            <person name="Pouget J."/>
            <person name="Bernard R."/>
            <person name="Krahn M."/>
            <person name="Fernandez C."/>
            <person name="Levy N."/>
            <person name="Pellissier J.F."/>
        </authorList>
    </citation>
    <scope>VARIANT RMD2 GLN-27</scope>
</reference>
<reference key="25">
    <citation type="journal article" date="2003" name="Neurology">
        <title>A CAV3 microdeletion differentially affects skeletal muscle and myocardium.</title>
        <authorList>
            <person name="Cagliani R."/>
            <person name="Bresolin N."/>
            <person name="Prelle A."/>
            <person name="Gallanti A."/>
            <person name="Fortunato F."/>
            <person name="Sironi M."/>
            <person name="Ciscato P."/>
            <person name="Fagiolari G."/>
            <person name="Bonato S."/>
            <person name="Galbiati S."/>
            <person name="Corti S."/>
            <person name="Lamperti C."/>
            <person name="Moggio M."/>
            <person name="Comi G.P."/>
        </authorList>
    </citation>
    <scope>VARIANT HYPCK PHE-97 DEL</scope>
</reference>
<reference key="26">
    <citation type="journal article" date="2004" name="Biochem. Biophys. Res. Commun.">
        <title>Identification and functional analysis of a caveolin-3 mutation associated with familial hypertrophic cardiomyopathy.</title>
        <authorList>
            <person name="Hayashi T."/>
            <person name="Arimura T."/>
            <person name="Ueda K."/>
            <person name="Shibata H."/>
            <person name="Hohda S."/>
            <person name="Takahashi M."/>
            <person name="Hori H."/>
            <person name="Koga Y."/>
            <person name="Oka N."/>
            <person name="Imaizumi T."/>
            <person name="Yasunami M."/>
            <person name="Kimura A."/>
        </authorList>
    </citation>
    <scope>VARIANT CMH SER-64</scope>
</reference>
<reference key="27">
    <citation type="journal article" date="2004" name="Neuromuscul. Disord.">
        <title>A novel mutation in the caveolin-3 gene causing familial isolated hyperCKaemia.</title>
        <authorList>
            <person name="Alias L."/>
            <person name="Gallano P."/>
            <person name="Moreno D."/>
            <person name="Pujol R."/>
            <person name="Martinez-Matos J.A."/>
            <person name="Baiget M."/>
            <person name="Ferrer I."/>
            <person name="Olive M."/>
        </authorList>
    </citation>
    <scope>VARIANT HYPCK MET-57</scope>
</reference>
<reference key="28">
    <citation type="journal article" date="2004" name="Neuromuscul. Disord.">
        <title>Two novel CAV3 gene mutations in Japanese families.</title>
        <authorList>
            <person name="Sugie K."/>
            <person name="Murayama K."/>
            <person name="Noguchi S."/>
            <person name="Murakami N."/>
            <person name="Mochizuki M."/>
            <person name="Hayashi Y.K."/>
            <person name="Nonaka I."/>
            <person name="Nishino I."/>
        </authorList>
    </citation>
    <scope>VARIANTS RMD2 LYS-33 AND GLU-44</scope>
</reference>
<reference key="29">
    <citation type="journal article" date="2005" name="Ann. Neurol.">
        <title>Autosomal recessive rippling muscle disease with homozygous CAV3 mutations.</title>
        <authorList>
            <person name="Kubisch C."/>
            <person name="Ketelsen U.-P."/>
            <person name="Goebel I."/>
            <person name="Omran H."/>
        </authorList>
    </citation>
    <scope>VARIANT RMD2 THR-93</scope>
</reference>
<reference key="30">
    <citation type="journal article" date="2005" name="Hum. Mutat.">
        <title>Molecular and muscle pathology in a series of caveolinopathy patients.</title>
        <authorList>
            <person name="Fulizio L."/>
            <person name="Chiara-Nascimbeni A."/>
            <person name="Fanin M."/>
            <person name="Piluso G."/>
            <person name="Politano L."/>
            <person name="Nigro V."/>
            <person name="Angelini C."/>
        </authorList>
    </citation>
    <scope>VARIANT HYPCK GLN-27</scope>
    <scope>VARIANT RMD2 THR-46</scope>
    <scope>VARIANT MPDT LYS-33</scope>
    <scope>VARIANT MYOPATHY ARG-61</scope>
</reference>
<reference key="31">
    <citation type="journal article" date="2006" name="J. Neurol. Sci.">
        <title>A new missense mutation in caveolin-3 gene causes rippling muscle disease.</title>
        <authorList>
            <person name="Dotti M.T."/>
            <person name="Malandrini A."/>
            <person name="Gambelli S."/>
            <person name="Salvadori C."/>
            <person name="De Stefano N."/>
            <person name="Federico A."/>
        </authorList>
    </citation>
    <scope>VARIANT RMD2 GLY-53</scope>
</reference>
<reference key="32">
    <citation type="journal article" date="2006" name="Circulation">
        <title>Mutant caveolin-3 induces persistent late sodium current and is associated with long-QT syndrome.</title>
        <authorList>
            <person name="Vatta M."/>
            <person name="Ackerman M.J."/>
            <person name="Ye B."/>
            <person name="Makielski J.C."/>
            <person name="Ughanze E.E."/>
            <person name="Taylor E.W."/>
            <person name="Tester D.J."/>
            <person name="Balijepalli R.C."/>
            <person name="Foell J.D."/>
            <person name="Li Z."/>
            <person name="Kamp T.J."/>
            <person name="Towbin J.A."/>
        </authorList>
    </citation>
    <scope>VARIANTS LQT9 MET-78; THR-85; CYS-97 AND ARG-141</scope>
    <scope>VARIANTS SER-56 AND TRP-72</scope>
    <scope>CHARACTERIZATION OF VARIANTS LQT9 CYS-97 AND ARG-141</scope>
</reference>
<reference key="33">
    <citation type="journal article" date="2007" name="Heart Rhythm">
        <title>Novel mechanism for sudden infant death syndrome: persistent late sodium current secondary to mutations in caveolin-3.</title>
        <authorList>
            <person name="Cronk L.B."/>
            <person name="Ye B."/>
            <person name="Kaku T."/>
            <person name="Tester D.J."/>
            <person name="Vatta M."/>
            <person name="Makielski J.C."/>
            <person name="Ackerman M.J."/>
        </authorList>
    </citation>
    <scope>VARIANTS LQT9/SIDS LEU-14; MET-78 AND ARG-79</scope>
    <scope>INVOLVEMENT IN SIDS</scope>
</reference>
<dbReference type="EMBL" id="AF043101">
    <property type="protein sequence ID" value="AAC14931.1"/>
    <property type="status" value="ALT_INIT"/>
    <property type="molecule type" value="mRNA"/>
</dbReference>
<dbReference type="EMBL" id="Y14747">
    <property type="protein sequence ID" value="CAA75042.1"/>
    <property type="molecule type" value="mRNA"/>
</dbReference>
<dbReference type="EMBL" id="AF036367">
    <property type="protein sequence ID" value="AAC39758.1"/>
    <property type="molecule type" value="Genomic_DNA"/>
</dbReference>
<dbReference type="EMBL" id="AF036366">
    <property type="protein sequence ID" value="AAC39758.1"/>
    <property type="status" value="JOINED"/>
    <property type="molecule type" value="Genomic_DNA"/>
</dbReference>
<dbReference type="EMBL" id="AF036365">
    <property type="protein sequence ID" value="AAC39756.1"/>
    <property type="molecule type" value="mRNA"/>
</dbReference>
<dbReference type="EMBL" id="AK291892">
    <property type="protein sequence ID" value="BAF84581.1"/>
    <property type="status" value="ALT_INIT"/>
    <property type="molecule type" value="mRNA"/>
</dbReference>
<dbReference type="EMBL" id="AC068312">
    <property type="status" value="NOT_ANNOTATED_CDS"/>
    <property type="molecule type" value="Genomic_DNA"/>
</dbReference>
<dbReference type="EMBL" id="BC069368">
    <property type="protein sequence ID" value="AAH69368.1"/>
    <property type="molecule type" value="mRNA"/>
</dbReference>
<dbReference type="EMBL" id="BC102033">
    <property type="protein sequence ID" value="AAI02034.1"/>
    <property type="molecule type" value="mRNA"/>
</dbReference>
<dbReference type="EMBL" id="BC102036">
    <property type="protein sequence ID" value="AAI02037.1"/>
    <property type="molecule type" value="mRNA"/>
</dbReference>
<dbReference type="EMBL" id="BC102037">
    <property type="protein sequence ID" value="AAI02038.1"/>
    <property type="molecule type" value="mRNA"/>
</dbReference>
<dbReference type="CCDS" id="CCDS2569.1"/>
<dbReference type="RefSeq" id="NP_001225.1">
    <property type="nucleotide sequence ID" value="NM_001234.5"/>
</dbReference>
<dbReference type="RefSeq" id="NP_203123.1">
    <property type="nucleotide sequence ID" value="NM_033337.3"/>
</dbReference>
<dbReference type="SMR" id="P56539"/>
<dbReference type="BioGRID" id="107307">
    <property type="interactions" value="67"/>
</dbReference>
<dbReference type="CORUM" id="P56539"/>
<dbReference type="FunCoup" id="P56539">
    <property type="interactions" value="509"/>
</dbReference>
<dbReference type="IntAct" id="P56539">
    <property type="interactions" value="44"/>
</dbReference>
<dbReference type="MINT" id="P56539"/>
<dbReference type="STRING" id="9606.ENSP00000341940"/>
<dbReference type="TCDB" id="1.F.1.2.1">
    <property type="family name" value="the synaptosomal vesicle fusion pore (svf-pore) family"/>
</dbReference>
<dbReference type="TCDB" id="8.A.26.1.7">
    <property type="family name" value="the caveolin (caveolin) family"/>
</dbReference>
<dbReference type="iPTMnet" id="P56539"/>
<dbReference type="PhosphoSitePlus" id="P56539"/>
<dbReference type="SwissPalm" id="P56539"/>
<dbReference type="BioMuta" id="CAV3"/>
<dbReference type="DMDM" id="3182930"/>
<dbReference type="jPOST" id="P56539"/>
<dbReference type="MassIVE" id="P56539"/>
<dbReference type="PaxDb" id="9606-ENSP00000341940"/>
<dbReference type="PeptideAtlas" id="P56539"/>
<dbReference type="ProteomicsDB" id="56922"/>
<dbReference type="Antibodypedia" id="4305">
    <property type="antibodies" value="284 antibodies from 38 providers"/>
</dbReference>
<dbReference type="DNASU" id="859"/>
<dbReference type="Ensembl" id="ENST00000343849.3">
    <property type="protein sequence ID" value="ENSP00000341940.2"/>
    <property type="gene ID" value="ENSG00000182533.7"/>
</dbReference>
<dbReference type="Ensembl" id="ENST00000397368.2">
    <property type="protein sequence ID" value="ENSP00000380525.2"/>
    <property type="gene ID" value="ENSG00000182533.7"/>
</dbReference>
<dbReference type="GeneID" id="859"/>
<dbReference type="KEGG" id="hsa:859"/>
<dbReference type="MANE-Select" id="ENST00000343849.3">
    <property type="protein sequence ID" value="ENSP00000341940.2"/>
    <property type="RefSeq nucleotide sequence ID" value="NM_033337.3"/>
    <property type="RefSeq protein sequence ID" value="NP_203123.1"/>
</dbReference>
<dbReference type="UCSC" id="uc003bra.4">
    <property type="organism name" value="human"/>
</dbReference>
<dbReference type="AGR" id="HGNC:1529"/>
<dbReference type="CTD" id="859"/>
<dbReference type="DisGeNET" id="859"/>
<dbReference type="GeneCards" id="CAV3"/>
<dbReference type="HGNC" id="HGNC:1529">
    <property type="gene designation" value="CAV3"/>
</dbReference>
<dbReference type="HPA" id="ENSG00000182533">
    <property type="expression patterns" value="Group enriched (skeletal muscle, tongue)"/>
</dbReference>
<dbReference type="MalaCards" id="CAV3"/>
<dbReference type="MIM" id="123320">
    <property type="type" value="phenotype"/>
</dbReference>
<dbReference type="MIM" id="192600">
    <property type="type" value="phenotype"/>
</dbReference>
<dbReference type="MIM" id="272120">
    <property type="type" value="phenotype"/>
</dbReference>
<dbReference type="MIM" id="601253">
    <property type="type" value="gene"/>
</dbReference>
<dbReference type="MIM" id="606072">
    <property type="type" value="phenotype"/>
</dbReference>
<dbReference type="MIM" id="611818">
    <property type="type" value="phenotype"/>
</dbReference>
<dbReference type="MIM" id="614321">
    <property type="type" value="phenotype"/>
</dbReference>
<dbReference type="neXtProt" id="NX_P56539"/>
<dbReference type="OpenTargets" id="ENSG00000182533"/>
<dbReference type="Orphanet" id="488650">
    <property type="disease" value="Distal myopathy, Tateyama type"/>
</dbReference>
<dbReference type="Orphanet" id="206599">
    <property type="disease" value="Isolated asymptomatic elevation of creatine phosphokinase"/>
</dbReference>
<dbReference type="Orphanet" id="97238">
    <property type="disease" value="Rippling muscle disease"/>
</dbReference>
<dbReference type="Orphanet" id="101016">
    <property type="disease" value="Romano-Ward syndrome"/>
</dbReference>
<dbReference type="PharmGKB" id="PA26109"/>
<dbReference type="VEuPathDB" id="HostDB:ENSG00000182533"/>
<dbReference type="eggNOG" id="ENOG502RYU9">
    <property type="taxonomic scope" value="Eukaryota"/>
</dbReference>
<dbReference type="GeneTree" id="ENSGT00950000183006"/>
<dbReference type="HOGENOM" id="CLU_102582_0_0_1"/>
<dbReference type="InParanoid" id="P56539"/>
<dbReference type="OMA" id="MCSSIKV"/>
<dbReference type="OrthoDB" id="5917823at2759"/>
<dbReference type="PAN-GO" id="P56539">
    <property type="GO annotations" value="10 GO annotations based on evolutionary models"/>
</dbReference>
<dbReference type="PhylomeDB" id="P56539"/>
<dbReference type="TreeFam" id="TF315736"/>
<dbReference type="PathwayCommons" id="P56539"/>
<dbReference type="Reactome" id="R-HSA-445355">
    <property type="pathway name" value="Smooth Muscle Contraction"/>
</dbReference>
<dbReference type="SignaLink" id="P56539"/>
<dbReference type="SIGNOR" id="P56539"/>
<dbReference type="BioGRID-ORCS" id="859">
    <property type="hits" value="11 hits in 1151 CRISPR screens"/>
</dbReference>
<dbReference type="GeneWiki" id="Caveolin_3"/>
<dbReference type="GenomeRNAi" id="859"/>
<dbReference type="Pharos" id="P56539">
    <property type="development level" value="Tbio"/>
</dbReference>
<dbReference type="PRO" id="PR:P56539"/>
<dbReference type="Proteomes" id="UP000005640">
    <property type="component" value="Chromosome 3"/>
</dbReference>
<dbReference type="RNAct" id="P56539">
    <property type="molecule type" value="protein"/>
</dbReference>
<dbReference type="Bgee" id="ENSG00000182533">
    <property type="expression patterns" value="Expressed in hindlimb stylopod muscle and 130 other cell types or tissues"/>
</dbReference>
<dbReference type="GO" id="GO:0005901">
    <property type="term" value="C:caveola"/>
    <property type="evidence" value="ECO:0000250"/>
    <property type="project" value="UniProtKB"/>
</dbReference>
<dbReference type="GO" id="GO:0009986">
    <property type="term" value="C:cell surface"/>
    <property type="evidence" value="ECO:0007669"/>
    <property type="project" value="Ensembl"/>
</dbReference>
<dbReference type="GO" id="GO:0016010">
    <property type="term" value="C:dystrophin-associated glycoprotein complex"/>
    <property type="evidence" value="ECO:0000314"/>
    <property type="project" value="UniProtKB"/>
</dbReference>
<dbReference type="GO" id="GO:0005783">
    <property type="term" value="C:endoplasmic reticulum"/>
    <property type="evidence" value="ECO:0000314"/>
    <property type="project" value="MGI"/>
</dbReference>
<dbReference type="GO" id="GO:0000139">
    <property type="term" value="C:Golgi membrane"/>
    <property type="evidence" value="ECO:0007669"/>
    <property type="project" value="UniProtKB-SubCell"/>
</dbReference>
<dbReference type="GO" id="GO:0014704">
    <property type="term" value="C:intercalated disc"/>
    <property type="evidence" value="ECO:0007669"/>
    <property type="project" value="Ensembl"/>
</dbReference>
<dbReference type="GO" id="GO:0043231">
    <property type="term" value="C:intracellular membrane-bounded organelle"/>
    <property type="evidence" value="ECO:0000314"/>
    <property type="project" value="HPA"/>
</dbReference>
<dbReference type="GO" id="GO:0045121">
    <property type="term" value="C:membrane raft"/>
    <property type="evidence" value="ECO:0000250"/>
    <property type="project" value="BHF-UCL"/>
</dbReference>
<dbReference type="GO" id="GO:0031594">
    <property type="term" value="C:neuromuscular junction"/>
    <property type="evidence" value="ECO:0000250"/>
    <property type="project" value="BHF-UCL"/>
</dbReference>
<dbReference type="GO" id="GO:0005886">
    <property type="term" value="C:plasma membrane"/>
    <property type="evidence" value="ECO:0000314"/>
    <property type="project" value="BHF-UCL"/>
</dbReference>
<dbReference type="GO" id="GO:0042383">
    <property type="term" value="C:sarcolemma"/>
    <property type="evidence" value="ECO:0000314"/>
    <property type="project" value="BHF-UCL"/>
</dbReference>
<dbReference type="GO" id="GO:0030315">
    <property type="term" value="C:T-tubule"/>
    <property type="evidence" value="ECO:0000250"/>
    <property type="project" value="BHF-UCL"/>
</dbReference>
<dbReference type="GO" id="GO:0031982">
    <property type="term" value="C:vesicle"/>
    <property type="evidence" value="ECO:0007669"/>
    <property type="project" value="Ensembl"/>
</dbReference>
<dbReference type="GO" id="GO:0030018">
    <property type="term" value="C:Z disc"/>
    <property type="evidence" value="ECO:0007669"/>
    <property type="project" value="Ensembl"/>
</dbReference>
<dbReference type="GO" id="GO:0043014">
    <property type="term" value="F:alpha-tubulin binding"/>
    <property type="evidence" value="ECO:0007669"/>
    <property type="project" value="Ensembl"/>
</dbReference>
<dbReference type="GO" id="GO:0005246">
    <property type="term" value="F:calcium channel regulator activity"/>
    <property type="evidence" value="ECO:0000314"/>
    <property type="project" value="BHF-UCL"/>
</dbReference>
<dbReference type="GO" id="GO:0071253">
    <property type="term" value="F:connexin binding"/>
    <property type="evidence" value="ECO:0000314"/>
    <property type="project" value="BHF-UCL"/>
</dbReference>
<dbReference type="GO" id="GO:0060090">
    <property type="term" value="F:molecular adaptor activity"/>
    <property type="evidence" value="ECO:0000353"/>
    <property type="project" value="BHF-UCL"/>
</dbReference>
<dbReference type="GO" id="GO:0050998">
    <property type="term" value="F:nitric-oxide synthase binding"/>
    <property type="evidence" value="ECO:0007669"/>
    <property type="project" value="Ensembl"/>
</dbReference>
<dbReference type="GO" id="GO:0019870">
    <property type="term" value="F:potassium channel inhibitor activity"/>
    <property type="evidence" value="ECO:0000250"/>
    <property type="project" value="BHF-UCL"/>
</dbReference>
<dbReference type="GO" id="GO:0044877">
    <property type="term" value="F:protein-containing complex binding"/>
    <property type="evidence" value="ECO:0000314"/>
    <property type="project" value="UniProtKB"/>
</dbReference>
<dbReference type="GO" id="GO:0017080">
    <property type="term" value="F:sodium channel regulator activity"/>
    <property type="evidence" value="ECO:0000314"/>
    <property type="project" value="BHF-UCL"/>
</dbReference>
<dbReference type="GO" id="GO:0044325">
    <property type="term" value="F:transmembrane transporter binding"/>
    <property type="evidence" value="ECO:0000353"/>
    <property type="project" value="BHF-UCL"/>
</dbReference>
<dbReference type="GO" id="GO:0007015">
    <property type="term" value="P:actin filament organization"/>
    <property type="evidence" value="ECO:0007669"/>
    <property type="project" value="Ensembl"/>
</dbReference>
<dbReference type="GO" id="GO:0006816">
    <property type="term" value="P:calcium ion transport"/>
    <property type="evidence" value="ECO:0007669"/>
    <property type="project" value="Ensembl"/>
</dbReference>
<dbReference type="GO" id="GO:0055013">
    <property type="term" value="P:cardiac muscle cell development"/>
    <property type="evidence" value="ECO:0007669"/>
    <property type="project" value="Ensembl"/>
</dbReference>
<dbReference type="GO" id="GO:0003300">
    <property type="term" value="P:cardiac muscle hypertrophy"/>
    <property type="evidence" value="ECO:0007669"/>
    <property type="project" value="Ensembl"/>
</dbReference>
<dbReference type="GO" id="GO:0070836">
    <property type="term" value="P:caveola assembly"/>
    <property type="evidence" value="ECO:0000314"/>
    <property type="project" value="MGI"/>
</dbReference>
<dbReference type="GO" id="GO:0030154">
    <property type="term" value="P:cell differentiation"/>
    <property type="evidence" value="ECO:0000250"/>
    <property type="project" value="BHF-UCL"/>
</dbReference>
<dbReference type="GO" id="GO:1904637">
    <property type="term" value="P:cellular response to ionomycin"/>
    <property type="evidence" value="ECO:0007669"/>
    <property type="project" value="Ensembl"/>
</dbReference>
<dbReference type="GO" id="GO:0042632">
    <property type="term" value="P:cholesterol homeostasis"/>
    <property type="evidence" value="ECO:0000250"/>
    <property type="project" value="BHF-UCL"/>
</dbReference>
<dbReference type="GO" id="GO:0031122">
    <property type="term" value="P:cytoplasmic microtubule organization"/>
    <property type="evidence" value="ECO:0007669"/>
    <property type="project" value="Ensembl"/>
</dbReference>
<dbReference type="GO" id="GO:0035995">
    <property type="term" value="P:detection of muscle stretch"/>
    <property type="evidence" value="ECO:0000250"/>
    <property type="project" value="BHF-UCL"/>
</dbReference>
<dbReference type="GO" id="GO:0006897">
    <property type="term" value="P:endocytosis"/>
    <property type="evidence" value="ECO:0000250"/>
    <property type="project" value="BHF-UCL"/>
</dbReference>
<dbReference type="GO" id="GO:0051649">
    <property type="term" value="P:establishment of localization in cell"/>
    <property type="evidence" value="ECO:0007669"/>
    <property type="project" value="Ensembl"/>
</dbReference>
<dbReference type="GO" id="GO:0042593">
    <property type="term" value="P:glucose homeostasis"/>
    <property type="evidence" value="ECO:0000250"/>
    <property type="project" value="BHF-UCL"/>
</dbReference>
<dbReference type="GO" id="GO:0060347">
    <property type="term" value="P:heart trabecula formation"/>
    <property type="evidence" value="ECO:0007669"/>
    <property type="project" value="Ensembl"/>
</dbReference>
<dbReference type="GO" id="GO:0000165">
    <property type="term" value="P:MAPK cascade"/>
    <property type="evidence" value="ECO:0007669"/>
    <property type="project" value="Ensembl"/>
</dbReference>
<dbReference type="GO" id="GO:0031579">
    <property type="term" value="P:membrane raft organization"/>
    <property type="evidence" value="ECO:0000250"/>
    <property type="project" value="BHF-UCL"/>
</dbReference>
<dbReference type="GO" id="GO:0007517">
    <property type="term" value="P:muscle organ development"/>
    <property type="evidence" value="ECO:0000304"/>
    <property type="project" value="UniProtKB"/>
</dbReference>
<dbReference type="GO" id="GO:0007520">
    <property type="term" value="P:myoblast fusion"/>
    <property type="evidence" value="ECO:0007669"/>
    <property type="project" value="Ensembl"/>
</dbReference>
<dbReference type="GO" id="GO:0051926">
    <property type="term" value="P:negative regulation of calcium ion transport"/>
    <property type="evidence" value="ECO:0000314"/>
    <property type="project" value="MGI"/>
</dbReference>
<dbReference type="GO" id="GO:0010614">
    <property type="term" value="P:negative regulation of cardiac muscle hypertrophy"/>
    <property type="evidence" value="ECO:0000315"/>
    <property type="project" value="BHF-UCL"/>
</dbReference>
<dbReference type="GO" id="GO:0061052">
    <property type="term" value="P:negative regulation of cell growth involved in cardiac muscle cell development"/>
    <property type="evidence" value="ECO:0007669"/>
    <property type="project" value="Ensembl"/>
</dbReference>
<dbReference type="GO" id="GO:0045792">
    <property type="term" value="P:negative regulation of cell size"/>
    <property type="evidence" value="ECO:0000315"/>
    <property type="project" value="BHF-UCL"/>
</dbReference>
<dbReference type="GO" id="GO:0043409">
    <property type="term" value="P:negative regulation of MAPK cascade"/>
    <property type="evidence" value="ECO:0000315"/>
    <property type="project" value="BHF-UCL"/>
</dbReference>
<dbReference type="GO" id="GO:1900826">
    <property type="term" value="P:negative regulation of membrane depolarization during cardiac muscle cell action potential"/>
    <property type="evidence" value="ECO:0007669"/>
    <property type="project" value="Ensembl"/>
</dbReference>
<dbReference type="GO" id="GO:1901380">
    <property type="term" value="P:negative regulation of potassium ion transmembrane transport"/>
    <property type="evidence" value="ECO:0000250"/>
    <property type="project" value="BHF-UCL"/>
</dbReference>
<dbReference type="GO" id="GO:2000009">
    <property type="term" value="P:negative regulation of protein localization to cell surface"/>
    <property type="evidence" value="ECO:0000303"/>
    <property type="project" value="BHF-UCL"/>
</dbReference>
<dbReference type="GO" id="GO:0060299">
    <property type="term" value="P:negative regulation of sarcomere organization"/>
    <property type="evidence" value="ECO:0000315"/>
    <property type="project" value="BHF-UCL"/>
</dbReference>
<dbReference type="GO" id="GO:0051647">
    <property type="term" value="P:nucleus localization"/>
    <property type="evidence" value="ECO:0007669"/>
    <property type="project" value="Ensembl"/>
</dbReference>
<dbReference type="GO" id="GO:0007009">
    <property type="term" value="P:plasma membrane organization"/>
    <property type="evidence" value="ECO:0000250"/>
    <property type="project" value="BHF-UCL"/>
</dbReference>
<dbReference type="GO" id="GO:0001778">
    <property type="term" value="P:plasma membrane repair"/>
    <property type="evidence" value="ECO:0007669"/>
    <property type="project" value="Ensembl"/>
</dbReference>
<dbReference type="GO" id="GO:2001288">
    <property type="term" value="P:positive regulation of caveolin-mediated endocytosis"/>
    <property type="evidence" value="ECO:0007669"/>
    <property type="project" value="Ensembl"/>
</dbReference>
<dbReference type="GO" id="GO:0008284">
    <property type="term" value="P:positive regulation of cell population proliferation"/>
    <property type="evidence" value="ECO:0007669"/>
    <property type="project" value="Ensembl"/>
</dbReference>
<dbReference type="GO" id="GO:0007204">
    <property type="term" value="P:positive regulation of cytosolic calcium ion concentration"/>
    <property type="evidence" value="ECO:0000250"/>
    <property type="project" value="BHF-UCL"/>
</dbReference>
<dbReference type="GO" id="GO:0031116">
    <property type="term" value="P:positive regulation of microtubule polymerization"/>
    <property type="evidence" value="ECO:0000250"/>
    <property type="project" value="BHF-UCL"/>
</dbReference>
<dbReference type="GO" id="GO:0010831">
    <property type="term" value="P:positive regulation of myotube differentiation"/>
    <property type="evidence" value="ECO:0007669"/>
    <property type="project" value="Ensembl"/>
</dbReference>
<dbReference type="GO" id="GO:2000060">
    <property type="term" value="P:positive regulation of ubiquitin-dependent protein catabolic process"/>
    <property type="evidence" value="ECO:0000303"/>
    <property type="project" value="BHF-UCL"/>
</dbReference>
<dbReference type="GO" id="GO:0008104">
    <property type="term" value="P:protein localization"/>
    <property type="evidence" value="ECO:0000250"/>
    <property type="project" value="BHF-UCL"/>
</dbReference>
<dbReference type="GO" id="GO:0072659">
    <property type="term" value="P:protein localization to plasma membrane"/>
    <property type="evidence" value="ECO:0000250"/>
    <property type="project" value="BHF-UCL"/>
</dbReference>
<dbReference type="GO" id="GO:0060762">
    <property type="term" value="P:regulation of branching involved in mammary gland duct morphogenesis"/>
    <property type="evidence" value="ECO:0007669"/>
    <property type="project" value="Ensembl"/>
</dbReference>
<dbReference type="GO" id="GO:0090279">
    <property type="term" value="P:regulation of calcium ion import"/>
    <property type="evidence" value="ECO:0000314"/>
    <property type="project" value="BHF-UCL"/>
</dbReference>
<dbReference type="GO" id="GO:0098909">
    <property type="term" value="P:regulation of cardiac muscle cell action potential involved in regulation of contraction"/>
    <property type="evidence" value="ECO:0000315"/>
    <property type="project" value="BHF-UCL"/>
</dbReference>
<dbReference type="GO" id="GO:0055117">
    <property type="term" value="P:regulation of cardiac muscle contraction"/>
    <property type="evidence" value="ECO:0000315"/>
    <property type="project" value="BHF-UCL"/>
</dbReference>
<dbReference type="GO" id="GO:0051480">
    <property type="term" value="P:regulation of cytosolic calcium ion concentration"/>
    <property type="evidence" value="ECO:0000318"/>
    <property type="project" value="GO_Central"/>
</dbReference>
<dbReference type="GO" id="GO:0008016">
    <property type="term" value="P:regulation of heart contraction"/>
    <property type="evidence" value="ECO:0000315"/>
    <property type="project" value="BHF-UCL"/>
</dbReference>
<dbReference type="GO" id="GO:0002027">
    <property type="term" value="P:regulation of heart rate"/>
    <property type="evidence" value="ECO:0000315"/>
    <property type="project" value="BHF-UCL"/>
</dbReference>
<dbReference type="GO" id="GO:1900825">
    <property type="term" value="P:regulation of membrane depolarization during cardiac muscle cell action potential"/>
    <property type="evidence" value="ECO:0000315"/>
    <property type="project" value="BHF-UCL"/>
</dbReference>
<dbReference type="GO" id="GO:0042391">
    <property type="term" value="P:regulation of membrane potential"/>
    <property type="evidence" value="ECO:0000314"/>
    <property type="project" value="BHF-UCL"/>
</dbReference>
<dbReference type="GO" id="GO:0051394">
    <property type="term" value="P:regulation of nerve growth factor receptor activity"/>
    <property type="evidence" value="ECO:0000315"/>
    <property type="project" value="MGI"/>
</dbReference>
<dbReference type="GO" id="GO:1900744">
    <property type="term" value="P:regulation of p38MAPK cascade"/>
    <property type="evidence" value="ECO:0007669"/>
    <property type="project" value="Ensembl"/>
</dbReference>
<dbReference type="GO" id="GO:0051896">
    <property type="term" value="P:regulation of phosphatidylinositol 3-kinase/protein kinase B signal transduction"/>
    <property type="evidence" value="ECO:0007669"/>
    <property type="project" value="Ensembl"/>
</dbReference>
<dbReference type="GO" id="GO:0038009">
    <property type="term" value="P:regulation of signal transduction by receptor internalization"/>
    <property type="evidence" value="ECO:0000315"/>
    <property type="project" value="MGI"/>
</dbReference>
<dbReference type="GO" id="GO:0014819">
    <property type="term" value="P:regulation of skeletal muscle contraction"/>
    <property type="evidence" value="ECO:0000315"/>
    <property type="project" value="BHF-UCL"/>
</dbReference>
<dbReference type="GO" id="GO:1902305">
    <property type="term" value="P:regulation of sodium ion transmembrane transport"/>
    <property type="evidence" value="ECO:0000314"/>
    <property type="project" value="BHF-UCL"/>
</dbReference>
<dbReference type="GO" id="GO:0017015">
    <property type="term" value="P:regulation of transforming growth factor beta receptor signaling pathway"/>
    <property type="evidence" value="ECO:0007669"/>
    <property type="project" value="Ensembl"/>
</dbReference>
<dbReference type="GO" id="GO:0060373">
    <property type="term" value="P:regulation of ventricular cardiac muscle cell membrane depolarization"/>
    <property type="evidence" value="ECO:0000314"/>
    <property type="project" value="BHF-UCL"/>
</dbReference>
<dbReference type="GO" id="GO:0060307">
    <property type="term" value="P:regulation of ventricular cardiac muscle cell membrane repolarization"/>
    <property type="evidence" value="ECO:0000315"/>
    <property type="project" value="BHF-UCL"/>
</dbReference>
<dbReference type="GO" id="GO:0001666">
    <property type="term" value="P:response to hypoxia"/>
    <property type="evidence" value="ECO:0007669"/>
    <property type="project" value="Ensembl"/>
</dbReference>
<dbReference type="GO" id="GO:0002931">
    <property type="term" value="P:response to ischemia"/>
    <property type="evidence" value="ECO:0007669"/>
    <property type="project" value="Ensembl"/>
</dbReference>
<dbReference type="GO" id="GO:0033292">
    <property type="term" value="P:T-tubule organization"/>
    <property type="evidence" value="ECO:0000304"/>
    <property type="project" value="BHF-UCL"/>
</dbReference>
<dbReference type="GO" id="GO:0006641">
    <property type="term" value="P:triglyceride metabolic process"/>
    <property type="evidence" value="ECO:0000250"/>
    <property type="project" value="BHF-UCL"/>
</dbReference>
<dbReference type="GO" id="GO:0086005">
    <property type="term" value="P:ventricular cardiac muscle cell action potential"/>
    <property type="evidence" value="ECO:0000250"/>
    <property type="project" value="BHF-UCL"/>
</dbReference>
<dbReference type="InterPro" id="IPR001612">
    <property type="entry name" value="Caveolin"/>
</dbReference>
<dbReference type="InterPro" id="IPR018361">
    <property type="entry name" value="Caveolin_CS"/>
</dbReference>
<dbReference type="PANTHER" id="PTHR10844">
    <property type="entry name" value="CAVEOLIN"/>
    <property type="match status" value="1"/>
</dbReference>
<dbReference type="PANTHER" id="PTHR10844:SF16">
    <property type="entry name" value="CAVEOLIN-3"/>
    <property type="match status" value="1"/>
</dbReference>
<dbReference type="Pfam" id="PF01146">
    <property type="entry name" value="Caveolin"/>
    <property type="match status" value="1"/>
</dbReference>
<dbReference type="PROSITE" id="PS01210">
    <property type="entry name" value="CAVEOLIN"/>
    <property type="match status" value="1"/>
</dbReference>
<comment type="function">
    <text evidence="2 26">May act as a scaffolding protein within caveolar membranes. Interacts directly with G-protein alpha subunits and can functionally regulate their activity. May also regulate voltage-gated potassium channels. Plays a role in the sarcolemma repair mechanism of both skeletal muscle and cardiomyocytes that permits rapid resealing of membranes disrupted by mechanical stress (By similarity). Mediates the recruitment of CAVIN2 and CAVIN3 proteins to the caveolae (PubMed:19262564).</text>
</comment>
<comment type="subunit">
    <text evidence="2 3 6 8 10 28">Homooligomer. Interacts with DLG1 and KCNA5; forms a ternary complex. Interacts with TRIM72. Interacts with MUSK; may regulate MUSK signaling. Interacts with DAG1 (via its C-terminal); the interaction prevents binding of DAG1 with DMD (PubMed:10988290). Interacts with DYSF (PubMed:11532985). Interacts with POPDC1 (By similarity). Interacts with CAVIN1 and CAVIN2 (PubMed:24567387). Interacts with CAVIN4 (PubMed:11251997, PubMed:24567387).</text>
</comment>
<comment type="interaction">
    <interactant intactId="EBI-3905936">
        <id>P56539</id>
    </interactant>
    <interactant intactId="EBI-2559016">
        <id>Q6NZI2</id>
        <label>CAVIN1</label>
    </interactant>
    <organismsDiffer>false</organismsDiffer>
    <experiments>4</experiments>
</comment>
<comment type="interaction">
    <interactant intactId="EBI-3905936">
        <id>P56539</id>
    </interactant>
    <interactant intactId="EBI-25836642">
        <id>Q8NE08</id>
        <label>COL25A1</label>
    </interactant>
    <organismsDiffer>false</organismsDiffer>
    <experiments>3</experiments>
</comment>
<comment type="interaction">
    <interactant intactId="EBI-3905936">
        <id>P56539</id>
    </interactant>
    <interactant intactId="EBI-741171">
        <id>Q96AL5</id>
        <label>PBX3</label>
    </interactant>
    <organismsDiffer>false</organismsDiffer>
    <experiments>3</experiments>
</comment>
<comment type="interaction">
    <interactant intactId="EBI-3905936">
        <id>P56539</id>
    </interactant>
    <interactant intactId="EBI-3232108">
        <id>Q8N0V3</id>
        <label>RBFA</label>
    </interactant>
    <organismsDiffer>false</organismsDiffer>
    <experiments>3</experiments>
</comment>
<comment type="interaction">
    <interactant intactId="EBI-3905936">
        <id>P56539</id>
    </interactant>
    <interactant intactId="EBI-10042882">
        <id>P0DOE7</id>
        <label>M</label>
    </interactant>
    <organismsDiffer>true</organismsDiffer>
    <experiments>2</experiments>
</comment>
<comment type="subcellular location">
    <subcellularLocation>
        <location evidence="1">Golgi apparatus membrane</location>
        <topology evidence="1">Peripheral membrane protein</topology>
    </subcellularLocation>
    <subcellularLocation>
        <location evidence="3">Cell membrane</location>
        <topology evidence="1">Peripheral membrane protein</topology>
    </subcellularLocation>
    <subcellularLocation>
        <location evidence="2">Membrane</location>
        <location evidence="2">Caveola</location>
        <topology evidence="1">Peripheral membrane protein</topology>
    </subcellularLocation>
    <subcellularLocation>
        <location evidence="2">Cell membrane</location>
        <location evidence="2">Sarcolemma</location>
    </subcellularLocation>
    <text evidence="1">Potential hairpin-like structure in the membrane. Membrane protein of caveolae (By similarity).</text>
</comment>
<comment type="tissue specificity">
    <text evidence="31">Expressed predominantly in muscle.</text>
</comment>
<comment type="PTM">
    <text evidence="27">Sumoylation with SUMO3 by PIAS4 may reduce agonist-induced internalization and desensitization of adrenergic receptor ABRD2.</text>
</comment>
<comment type="disease" evidence="5 13 17 19 21">
    <disease id="DI-01766">
        <name>HyperCKmia</name>
        <acronym>HYPCK</acronym>
        <description>Characterized by persistent elevated levels of serum creatine kinase without muscle weakness.</description>
        <dbReference type="MIM" id="123320"/>
    </disease>
    <text>The disease is caused by variants affecting the gene represented in this entry.</text>
</comment>
<comment type="disease" evidence="7 9 10 11 14 15 16 20 21 22 23 30">
    <disease id="DI-02270">
        <name>Rippling muscle disease 2</name>
        <acronym>RMD2</acronym>
        <description>A disorder characterized by mechanically triggered contractions of skeletal muscle. Mechanical stimulation leads to electrically silent muscle contractions that spread to neighboring fibers and cause visible ripples to move over the muscle. RMD2 inheritance is autosomal dominant or autosomal recessive.</description>
        <dbReference type="MIM" id="606072"/>
    </disease>
    <text>The disease is caused by variants affecting the gene represented in this entry.</text>
</comment>
<comment type="disease" evidence="18">
    <disease id="DI-00232">
        <name>Cardiomyopathy, familial hypertrophic</name>
        <acronym>CMH</acronym>
        <description>A hereditary heart disorder characterized by ventricular hypertrophy, which is usually asymmetric and often involves the interventricular septum. The symptoms include dyspnea, syncope, collapse, palpitations, and chest pain. They can be readily provoked by exercise. The disorder has inter- and intrafamilial variability ranging from benign to malignant forms with high risk of cardiac failure and sudden cardiac death.</description>
        <dbReference type="MIM" id="192600"/>
    </disease>
    <text>The disease is caused by variants affecting the gene represented in this entry.</text>
</comment>
<comment type="disease" evidence="24 25">
    <disease id="DI-00686">
        <name>Long QT syndrome 9</name>
        <acronym>LQT9</acronym>
        <description>A heart disorder characterized by a prolonged QT interval on the ECG and polymorphic ventricular arrhythmias. They cause syncope and sudden death in response to exercise or emotional stress, and can present with a sentinel event of sudden cardiac death in infancy.</description>
        <dbReference type="MIM" id="611818"/>
    </disease>
    <text>The disease is caused by variants affecting the gene represented in this entry.</text>
</comment>
<comment type="disease" evidence="25">
    <disease id="DI-01096">
        <name>Sudden infant death syndrome</name>
        <acronym>SIDS</acronym>
        <description>SIDS is the sudden death of an infant younger than 1 year that remains unexplained after a thorough case investigation, including performance of a complete autopsy, examination of the death scene, and review of clinical history. Pathophysiologic mechanisms for SIDS may include respiratory dysfunction, cardiac dysrhythmias, cardiorespiratory instability, and inborn errors of metabolism, but definitive pathogenic mechanisms precipitating an infant sudden death remain elusive.</description>
        <dbReference type="MIM" id="272120"/>
    </disease>
    <text>Disease susceptibility is associated with variants affecting the gene represented in this entry.</text>
</comment>
<comment type="disease" evidence="12 21">
    <disease id="DI-03297">
        <name>Myopathy, distal, Tateyama type</name>
        <acronym>MPDT</acronym>
        <description>A disorder characterized by progressive muscular atrophy and muscle weakness beginning in the hands, the legs, or the feet. Muscle atrophy may be restricted to the small muscles of the hands and feet.</description>
        <dbReference type="MIM" id="614321"/>
    </disease>
    <text>The disease is caused by variants affecting the gene represented in this entry.</text>
</comment>
<comment type="similarity">
    <text evidence="32">Belongs to the caveolin family.</text>
</comment>
<comment type="caution">
    <text evidence="32">It is uncertain whether Met-1 or Met-2 is the initiator.</text>
</comment>
<comment type="sequence caution" evidence="32">
    <conflict type="erroneous initiation">
        <sequence resource="EMBL-CDS" id="AAC14931"/>
    </conflict>
    <text>Extended N-terminus.</text>
</comment>
<comment type="sequence caution" evidence="32">
    <conflict type="erroneous initiation">
        <sequence resource="EMBL-CDS" id="BAF84581"/>
    </conflict>
    <text>Truncated N-terminus.</text>
</comment>
<comment type="online information" name="CAV3/LGMD1C">
    <link uri="https://www.dmd.nl/cav3_home.html"/>
    <text>Caveolin-3/LGMD-1C page</text>
</comment>
<comment type="online information" name="Wikipedia">
    <link uri="https://en.wikipedia.org/wiki/Caveolin"/>
    <text>Caveolin entry</text>
</comment>
<accession>P56539</accession>
<accession>A8K777</accession>
<accession>Q3T1A4</accession>
<keyword id="KW-0122">Cardiomyopathy</keyword>
<keyword id="KW-1003">Cell membrane</keyword>
<keyword id="KW-0225">Disease variant</keyword>
<keyword id="KW-0333">Golgi apparatus</keyword>
<keyword id="KW-1017">Isopeptide bond</keyword>
<keyword id="KW-0947">Limb-girdle muscular dystrophy</keyword>
<keyword id="KW-0454">Long QT syndrome</keyword>
<keyword id="KW-0472">Membrane</keyword>
<keyword id="KW-1267">Proteomics identification</keyword>
<keyword id="KW-1185">Reference proteome</keyword>
<keyword id="KW-0832">Ubl conjugation</keyword>
<organism>
    <name type="scientific">Homo sapiens</name>
    <name type="common">Human</name>
    <dbReference type="NCBI Taxonomy" id="9606"/>
    <lineage>
        <taxon>Eukaryota</taxon>
        <taxon>Metazoa</taxon>
        <taxon>Chordata</taxon>
        <taxon>Craniata</taxon>
        <taxon>Vertebrata</taxon>
        <taxon>Euteleostomi</taxon>
        <taxon>Mammalia</taxon>
        <taxon>Eutheria</taxon>
        <taxon>Euarchontoglires</taxon>
        <taxon>Primates</taxon>
        <taxon>Haplorrhini</taxon>
        <taxon>Catarrhini</taxon>
        <taxon>Hominidae</taxon>
        <taxon>Homo</taxon>
    </lineage>
</organism>
<name>CAV3_HUMAN</name>
<proteinExistence type="evidence at protein level"/>
<evidence type="ECO:0000250" key="1"/>
<evidence type="ECO:0000250" key="2">
    <source>
        <dbReference type="UniProtKB" id="P51637"/>
    </source>
</evidence>
<evidence type="ECO:0000250" key="3">
    <source>
        <dbReference type="UniProtKB" id="P51638"/>
    </source>
</evidence>
<evidence type="ECO:0000255" key="4"/>
<evidence type="ECO:0000269" key="5">
    <source>
    </source>
</evidence>
<evidence type="ECO:0000269" key="6">
    <source>
    </source>
</evidence>
<evidence type="ECO:0000269" key="7">
    <source>
    </source>
</evidence>
<evidence type="ECO:0000269" key="8">
    <source>
    </source>
</evidence>
<evidence type="ECO:0000269" key="9">
    <source>
    </source>
</evidence>
<evidence type="ECO:0000269" key="10">
    <source>
    </source>
</evidence>
<evidence type="ECO:0000269" key="11">
    <source>
    </source>
</evidence>
<evidence type="ECO:0000269" key="12">
    <source>
    </source>
</evidence>
<evidence type="ECO:0000269" key="13">
    <source>
    </source>
</evidence>
<evidence type="ECO:0000269" key="14">
    <source>
    </source>
</evidence>
<evidence type="ECO:0000269" key="15">
    <source>
    </source>
</evidence>
<evidence type="ECO:0000269" key="16">
    <source>
    </source>
</evidence>
<evidence type="ECO:0000269" key="17">
    <source>
    </source>
</evidence>
<evidence type="ECO:0000269" key="18">
    <source>
    </source>
</evidence>
<evidence type="ECO:0000269" key="19">
    <source>
    </source>
</evidence>
<evidence type="ECO:0000269" key="20">
    <source>
    </source>
</evidence>
<evidence type="ECO:0000269" key="21">
    <source>
    </source>
</evidence>
<evidence type="ECO:0000269" key="22">
    <source>
    </source>
</evidence>
<evidence type="ECO:0000269" key="23">
    <source>
    </source>
</evidence>
<evidence type="ECO:0000269" key="24">
    <source>
    </source>
</evidence>
<evidence type="ECO:0000269" key="25">
    <source>
    </source>
</evidence>
<evidence type="ECO:0000269" key="26">
    <source>
    </source>
</evidence>
<evidence type="ECO:0000269" key="27">
    <source>
    </source>
</evidence>
<evidence type="ECO:0000269" key="28">
    <source>
    </source>
</evidence>
<evidence type="ECO:0000269" key="29">
    <source>
    </source>
</evidence>
<evidence type="ECO:0000269" key="30">
    <source>
    </source>
</evidence>
<evidence type="ECO:0000269" key="31">
    <source>
    </source>
</evidence>
<evidence type="ECO:0000305" key="32"/>
<protein>
    <recommendedName>
        <fullName>Caveolin-3</fullName>
    </recommendedName>
    <alternativeName>
        <fullName>M-caveolin</fullName>
    </alternativeName>
</protein>